<reference key="1">
    <citation type="journal article" date="2011" name="J. Bacteriol.">
        <title>Comparative genomics of 28 Salmonella enterica isolates: evidence for CRISPR-mediated adaptive sublineage evolution.</title>
        <authorList>
            <person name="Fricke W.F."/>
            <person name="Mammel M.K."/>
            <person name="McDermott P.F."/>
            <person name="Tartera C."/>
            <person name="White D.G."/>
            <person name="Leclerc J.E."/>
            <person name="Ravel J."/>
            <person name="Cebula T.A."/>
        </authorList>
    </citation>
    <scope>NUCLEOTIDE SEQUENCE [LARGE SCALE GENOMIC DNA]</scope>
    <source>
        <strain>CVM19633</strain>
    </source>
</reference>
<protein>
    <recommendedName>
        <fullName evidence="1">Recombination-associated protein RdgC</fullName>
    </recommendedName>
</protein>
<proteinExistence type="inferred from homology"/>
<dbReference type="EMBL" id="CP001127">
    <property type="protein sequence ID" value="ACF91615.1"/>
    <property type="molecule type" value="Genomic_DNA"/>
</dbReference>
<dbReference type="RefSeq" id="WP_000964305.1">
    <property type="nucleotide sequence ID" value="NC_011094.1"/>
</dbReference>
<dbReference type="SMR" id="B4TZG5"/>
<dbReference type="KEGG" id="sew:SeSA_A0448"/>
<dbReference type="HOGENOM" id="CLU_052038_1_1_6"/>
<dbReference type="Proteomes" id="UP000001865">
    <property type="component" value="Chromosome"/>
</dbReference>
<dbReference type="GO" id="GO:0043590">
    <property type="term" value="C:bacterial nucleoid"/>
    <property type="evidence" value="ECO:0007669"/>
    <property type="project" value="TreeGrafter"/>
</dbReference>
<dbReference type="GO" id="GO:0005737">
    <property type="term" value="C:cytoplasm"/>
    <property type="evidence" value="ECO:0007669"/>
    <property type="project" value="UniProtKB-UniRule"/>
</dbReference>
<dbReference type="GO" id="GO:0003690">
    <property type="term" value="F:double-stranded DNA binding"/>
    <property type="evidence" value="ECO:0007669"/>
    <property type="project" value="TreeGrafter"/>
</dbReference>
<dbReference type="GO" id="GO:0006310">
    <property type="term" value="P:DNA recombination"/>
    <property type="evidence" value="ECO:0007669"/>
    <property type="project" value="UniProtKB-UniRule"/>
</dbReference>
<dbReference type="GO" id="GO:0000018">
    <property type="term" value="P:regulation of DNA recombination"/>
    <property type="evidence" value="ECO:0007669"/>
    <property type="project" value="TreeGrafter"/>
</dbReference>
<dbReference type="HAMAP" id="MF_00194">
    <property type="entry name" value="RdgC"/>
    <property type="match status" value="1"/>
</dbReference>
<dbReference type="InterPro" id="IPR007476">
    <property type="entry name" value="RdgC"/>
</dbReference>
<dbReference type="NCBIfam" id="NF001460">
    <property type="entry name" value="PRK00321.1-1"/>
    <property type="match status" value="1"/>
</dbReference>
<dbReference type="NCBIfam" id="NF001462">
    <property type="entry name" value="PRK00321.1-3"/>
    <property type="match status" value="1"/>
</dbReference>
<dbReference type="NCBIfam" id="NF001464">
    <property type="entry name" value="PRK00321.1-5"/>
    <property type="match status" value="1"/>
</dbReference>
<dbReference type="PANTHER" id="PTHR38103">
    <property type="entry name" value="RECOMBINATION-ASSOCIATED PROTEIN RDGC"/>
    <property type="match status" value="1"/>
</dbReference>
<dbReference type="PANTHER" id="PTHR38103:SF1">
    <property type="entry name" value="RECOMBINATION-ASSOCIATED PROTEIN RDGC"/>
    <property type="match status" value="1"/>
</dbReference>
<dbReference type="Pfam" id="PF04381">
    <property type="entry name" value="RdgC"/>
    <property type="match status" value="1"/>
</dbReference>
<name>RDGC_SALSV</name>
<feature type="chain" id="PRO_1000099073" description="Recombination-associated protein RdgC">
    <location>
        <begin position="1"/>
        <end position="303"/>
    </location>
</feature>
<sequence>MLWFKNLMVYRLSRDITLRAEEMEKQLASMTFTPCGSQDMAKMGWVPPMGSHSDALTHTANGQIIICARKEEKILPSPVIKQALEAKIQKLEADQGRKLKKTEKDSLKDEVLHSLLPRAFSRFSQTMMWIDTVNGLIMVDCASAKKAEDTLALLRKSLGSLPVVPLALENPIELTLTEWVRSGTVAQGFQLLDEAELKAMLEDGGVIRAKKQDLVSDEIAVHIEAGKVVTKLALDWQQRIQFVMCDDGSIKRLKFCDELRDQNEDIDREDFAQRFDADFILMTGELAALIQSLVEGLGGEAQR</sequence>
<keyword id="KW-0963">Cytoplasm</keyword>
<keyword id="KW-0233">DNA recombination</keyword>
<gene>
    <name evidence="1" type="primary">rdgC</name>
    <name type="ordered locus">SeSA_A0448</name>
</gene>
<comment type="function">
    <text evidence="1">May be involved in recombination.</text>
</comment>
<comment type="subcellular location">
    <subcellularLocation>
        <location evidence="1">Cytoplasm</location>
        <location evidence="1">Nucleoid</location>
    </subcellularLocation>
</comment>
<comment type="similarity">
    <text evidence="1">Belongs to the RdgC family.</text>
</comment>
<accession>B4TZG5</accession>
<evidence type="ECO:0000255" key="1">
    <source>
        <dbReference type="HAMAP-Rule" id="MF_00194"/>
    </source>
</evidence>
<organism>
    <name type="scientific">Salmonella schwarzengrund (strain CVM19633)</name>
    <dbReference type="NCBI Taxonomy" id="439843"/>
    <lineage>
        <taxon>Bacteria</taxon>
        <taxon>Pseudomonadati</taxon>
        <taxon>Pseudomonadota</taxon>
        <taxon>Gammaproteobacteria</taxon>
        <taxon>Enterobacterales</taxon>
        <taxon>Enterobacteriaceae</taxon>
        <taxon>Salmonella</taxon>
    </lineage>
</organism>